<comment type="function">
    <text evidence="1">Negatively regulates the transcription of the flagellar master operon flhDC by binding to the upstream region of the operon.</text>
</comment>
<comment type="similarity">
    <text evidence="2">Belongs to the LysR transcriptional regulatory family.</text>
</comment>
<evidence type="ECO:0000255" key="1">
    <source>
        <dbReference type="HAMAP-Rule" id="MF_01233"/>
    </source>
</evidence>
<evidence type="ECO:0000305" key="2"/>
<dbReference type="EMBL" id="CU928161">
    <property type="protein sequence ID" value="CAR05384.1"/>
    <property type="molecule type" value="Genomic_DNA"/>
</dbReference>
<dbReference type="RefSeq" id="WP_000379257.1">
    <property type="nucleotide sequence ID" value="NC_011742.1"/>
</dbReference>
<dbReference type="SMR" id="B7MGH6"/>
<dbReference type="KEGG" id="ecz:ECS88_4187"/>
<dbReference type="HOGENOM" id="CLU_039613_8_2_6"/>
<dbReference type="Proteomes" id="UP000000747">
    <property type="component" value="Chromosome"/>
</dbReference>
<dbReference type="GO" id="GO:0003677">
    <property type="term" value="F:DNA binding"/>
    <property type="evidence" value="ECO:0007669"/>
    <property type="project" value="UniProtKB-KW"/>
</dbReference>
<dbReference type="GO" id="GO:0003700">
    <property type="term" value="F:DNA-binding transcription factor activity"/>
    <property type="evidence" value="ECO:0007669"/>
    <property type="project" value="UniProtKB-UniRule"/>
</dbReference>
<dbReference type="GO" id="GO:0045892">
    <property type="term" value="P:negative regulation of DNA-templated transcription"/>
    <property type="evidence" value="ECO:0007669"/>
    <property type="project" value="UniProtKB-UniRule"/>
</dbReference>
<dbReference type="FunFam" id="1.10.10.10:FF:000001">
    <property type="entry name" value="LysR family transcriptional regulator"/>
    <property type="match status" value="1"/>
</dbReference>
<dbReference type="Gene3D" id="3.40.190.10">
    <property type="entry name" value="Periplasmic binding protein-like II"/>
    <property type="match status" value="2"/>
</dbReference>
<dbReference type="Gene3D" id="1.10.10.10">
    <property type="entry name" value="Winged helix-like DNA-binding domain superfamily/Winged helix DNA-binding domain"/>
    <property type="match status" value="1"/>
</dbReference>
<dbReference type="HAMAP" id="MF_01233">
    <property type="entry name" value="HTH_type_HdfR"/>
    <property type="match status" value="1"/>
</dbReference>
<dbReference type="InterPro" id="IPR050176">
    <property type="entry name" value="LTTR"/>
</dbReference>
<dbReference type="InterPro" id="IPR005119">
    <property type="entry name" value="LysR_subst-bd"/>
</dbReference>
<dbReference type="InterPro" id="IPR020890">
    <property type="entry name" value="Tscrpt_reg_HTH_HdfR"/>
</dbReference>
<dbReference type="InterPro" id="IPR000847">
    <property type="entry name" value="Tscrpt_reg_HTH_LysR"/>
</dbReference>
<dbReference type="InterPro" id="IPR036388">
    <property type="entry name" value="WH-like_DNA-bd_sf"/>
</dbReference>
<dbReference type="InterPro" id="IPR036390">
    <property type="entry name" value="WH_DNA-bd_sf"/>
</dbReference>
<dbReference type="NCBIfam" id="NF002946">
    <property type="entry name" value="PRK03601.1"/>
    <property type="match status" value="1"/>
</dbReference>
<dbReference type="PANTHER" id="PTHR30579:SF8">
    <property type="entry name" value="HTH-TYPE TRANSCRIPTIONAL REGULATOR HDFR"/>
    <property type="match status" value="1"/>
</dbReference>
<dbReference type="PANTHER" id="PTHR30579">
    <property type="entry name" value="TRANSCRIPTIONAL REGULATOR"/>
    <property type="match status" value="1"/>
</dbReference>
<dbReference type="Pfam" id="PF00126">
    <property type="entry name" value="HTH_1"/>
    <property type="match status" value="1"/>
</dbReference>
<dbReference type="Pfam" id="PF03466">
    <property type="entry name" value="LysR_substrate"/>
    <property type="match status" value="1"/>
</dbReference>
<dbReference type="PRINTS" id="PR00039">
    <property type="entry name" value="HTHLYSR"/>
</dbReference>
<dbReference type="SUPFAM" id="SSF53850">
    <property type="entry name" value="Periplasmic binding protein-like II"/>
    <property type="match status" value="1"/>
</dbReference>
<dbReference type="SUPFAM" id="SSF46785">
    <property type="entry name" value="Winged helix' DNA-binding domain"/>
    <property type="match status" value="1"/>
</dbReference>
<dbReference type="PROSITE" id="PS50931">
    <property type="entry name" value="HTH_LYSR"/>
    <property type="match status" value="1"/>
</dbReference>
<organism>
    <name type="scientific">Escherichia coli O45:K1 (strain S88 / ExPEC)</name>
    <dbReference type="NCBI Taxonomy" id="585035"/>
    <lineage>
        <taxon>Bacteria</taxon>
        <taxon>Pseudomonadati</taxon>
        <taxon>Pseudomonadota</taxon>
        <taxon>Gammaproteobacteria</taxon>
        <taxon>Enterobacterales</taxon>
        <taxon>Enterobacteriaceae</taxon>
        <taxon>Escherichia</taxon>
    </lineage>
</organism>
<proteinExistence type="inferred from homology"/>
<protein>
    <recommendedName>
        <fullName evidence="1">HTH-type transcriptional regulator HdfR</fullName>
    </recommendedName>
    <alternativeName>
        <fullName evidence="1">H-NS-dependent flhDC regulator</fullName>
    </alternativeName>
</protein>
<feature type="chain" id="PRO_1000139662" description="HTH-type transcriptional regulator HdfR">
    <location>
        <begin position="1"/>
        <end position="279"/>
    </location>
</feature>
<feature type="domain" description="HTH lysR-type" evidence="1">
    <location>
        <begin position="1"/>
        <end position="58"/>
    </location>
</feature>
<feature type="DNA-binding region" description="H-T-H motif" evidence="1">
    <location>
        <begin position="18"/>
        <end position="37"/>
    </location>
</feature>
<keyword id="KW-0238">DNA-binding</keyword>
<keyword id="KW-1185">Reference proteome</keyword>
<keyword id="KW-0678">Repressor</keyword>
<keyword id="KW-0804">Transcription</keyword>
<keyword id="KW-0805">Transcription regulation</keyword>
<accession>B7MGH6</accession>
<name>HDFR_ECO45</name>
<sequence length="279" mass="31790">MDTELLKTFLEVSRTRHFGRAAESLYLTQSAVSFRIRQLENQLGVNLFTRHRNNIRLTAAGEKLLPYAETLMSTWQAARKEVAHTSRHNEFSIGASASLWECMLNQWLGRLYQNQDVHTGLQFEARIAQRQSLVKQLHERQLDLLITTEAPKMDEFCSQLLGYFTLALYTSAPSKLKGDLNYLRLEWGPDFQQHEAGLIGADEVPILTTSSAELAQQQIAMLNGCTWLPVSWARKKGGLHTVVDSTTLSRPLYAIWLQNSDKNALIRDLLKINVLDEVY</sequence>
<gene>
    <name evidence="1" type="primary">hdfR</name>
    <name type="ordered locus">ECS88_4187</name>
</gene>
<reference key="1">
    <citation type="journal article" date="2009" name="PLoS Genet.">
        <title>Organised genome dynamics in the Escherichia coli species results in highly diverse adaptive paths.</title>
        <authorList>
            <person name="Touchon M."/>
            <person name="Hoede C."/>
            <person name="Tenaillon O."/>
            <person name="Barbe V."/>
            <person name="Baeriswyl S."/>
            <person name="Bidet P."/>
            <person name="Bingen E."/>
            <person name="Bonacorsi S."/>
            <person name="Bouchier C."/>
            <person name="Bouvet O."/>
            <person name="Calteau A."/>
            <person name="Chiapello H."/>
            <person name="Clermont O."/>
            <person name="Cruveiller S."/>
            <person name="Danchin A."/>
            <person name="Diard M."/>
            <person name="Dossat C."/>
            <person name="Karoui M.E."/>
            <person name="Frapy E."/>
            <person name="Garry L."/>
            <person name="Ghigo J.M."/>
            <person name="Gilles A.M."/>
            <person name="Johnson J."/>
            <person name="Le Bouguenec C."/>
            <person name="Lescat M."/>
            <person name="Mangenot S."/>
            <person name="Martinez-Jehanne V."/>
            <person name="Matic I."/>
            <person name="Nassif X."/>
            <person name="Oztas S."/>
            <person name="Petit M.A."/>
            <person name="Pichon C."/>
            <person name="Rouy Z."/>
            <person name="Ruf C.S."/>
            <person name="Schneider D."/>
            <person name="Tourret J."/>
            <person name="Vacherie B."/>
            <person name="Vallenet D."/>
            <person name="Medigue C."/>
            <person name="Rocha E.P.C."/>
            <person name="Denamur E."/>
        </authorList>
    </citation>
    <scope>NUCLEOTIDE SEQUENCE [LARGE SCALE GENOMIC DNA]</scope>
    <source>
        <strain>S88 / ExPEC</strain>
    </source>
</reference>